<dbReference type="EC" id="2.7.2.11" evidence="1"/>
<dbReference type="EMBL" id="AE016830">
    <property type="protein sequence ID" value="AAO79920.1"/>
    <property type="molecule type" value="Genomic_DNA"/>
</dbReference>
<dbReference type="RefSeq" id="NP_813848.1">
    <property type="nucleotide sequence ID" value="NC_004668.1"/>
</dbReference>
<dbReference type="RefSeq" id="WP_002389550.1">
    <property type="nucleotide sequence ID" value="NZ_KE136524.1"/>
</dbReference>
<dbReference type="SMR" id="Q839W2"/>
<dbReference type="STRING" id="226185.EF_0038"/>
<dbReference type="EnsemblBacteria" id="AAO79920">
    <property type="protein sequence ID" value="AAO79920"/>
    <property type="gene ID" value="EF_0038"/>
</dbReference>
<dbReference type="GeneID" id="60892597"/>
<dbReference type="KEGG" id="efa:EF0038"/>
<dbReference type="PATRIC" id="fig|226185.45.peg.218"/>
<dbReference type="eggNOG" id="COG0263">
    <property type="taxonomic scope" value="Bacteria"/>
</dbReference>
<dbReference type="HOGENOM" id="CLU_025400_0_2_9"/>
<dbReference type="UniPathway" id="UPA00098">
    <property type="reaction ID" value="UER00359"/>
</dbReference>
<dbReference type="Proteomes" id="UP000001415">
    <property type="component" value="Chromosome"/>
</dbReference>
<dbReference type="GO" id="GO:0005829">
    <property type="term" value="C:cytosol"/>
    <property type="evidence" value="ECO:0007669"/>
    <property type="project" value="TreeGrafter"/>
</dbReference>
<dbReference type="GO" id="GO:0005524">
    <property type="term" value="F:ATP binding"/>
    <property type="evidence" value="ECO:0007669"/>
    <property type="project" value="UniProtKB-KW"/>
</dbReference>
<dbReference type="GO" id="GO:0004349">
    <property type="term" value="F:glutamate 5-kinase activity"/>
    <property type="evidence" value="ECO:0007669"/>
    <property type="project" value="UniProtKB-UniRule"/>
</dbReference>
<dbReference type="GO" id="GO:0055129">
    <property type="term" value="P:L-proline biosynthetic process"/>
    <property type="evidence" value="ECO:0007669"/>
    <property type="project" value="UniProtKB-UniRule"/>
</dbReference>
<dbReference type="CDD" id="cd04242">
    <property type="entry name" value="AAK_G5K_ProB"/>
    <property type="match status" value="1"/>
</dbReference>
<dbReference type="FunFam" id="3.40.1160.10:FF:000018">
    <property type="entry name" value="Glutamate 5-kinase"/>
    <property type="match status" value="1"/>
</dbReference>
<dbReference type="Gene3D" id="3.40.1160.10">
    <property type="entry name" value="Acetylglutamate kinase-like"/>
    <property type="match status" value="1"/>
</dbReference>
<dbReference type="HAMAP" id="MF_00456">
    <property type="entry name" value="ProB"/>
    <property type="match status" value="1"/>
</dbReference>
<dbReference type="InterPro" id="IPR036393">
    <property type="entry name" value="AceGlu_kinase-like_sf"/>
</dbReference>
<dbReference type="InterPro" id="IPR001048">
    <property type="entry name" value="Asp/Glu/Uridylate_kinase"/>
</dbReference>
<dbReference type="InterPro" id="IPR041739">
    <property type="entry name" value="G5K_ProB"/>
</dbReference>
<dbReference type="InterPro" id="IPR001057">
    <property type="entry name" value="Glu/AcGlu_kinase"/>
</dbReference>
<dbReference type="InterPro" id="IPR011529">
    <property type="entry name" value="Glu_5kinase"/>
</dbReference>
<dbReference type="InterPro" id="IPR005715">
    <property type="entry name" value="Glu_5kinase/COase_Synthase"/>
</dbReference>
<dbReference type="InterPro" id="IPR019797">
    <property type="entry name" value="Glutamate_5-kinase_CS"/>
</dbReference>
<dbReference type="NCBIfam" id="TIGR01027">
    <property type="entry name" value="proB"/>
    <property type="match status" value="1"/>
</dbReference>
<dbReference type="PANTHER" id="PTHR43654">
    <property type="entry name" value="GLUTAMATE 5-KINASE"/>
    <property type="match status" value="1"/>
</dbReference>
<dbReference type="PANTHER" id="PTHR43654:SF1">
    <property type="entry name" value="ISOPENTENYL PHOSPHATE KINASE"/>
    <property type="match status" value="1"/>
</dbReference>
<dbReference type="Pfam" id="PF00696">
    <property type="entry name" value="AA_kinase"/>
    <property type="match status" value="1"/>
</dbReference>
<dbReference type="PIRSF" id="PIRSF000729">
    <property type="entry name" value="GK"/>
    <property type="match status" value="1"/>
</dbReference>
<dbReference type="PRINTS" id="PR00474">
    <property type="entry name" value="GLU5KINASE"/>
</dbReference>
<dbReference type="SUPFAM" id="SSF53633">
    <property type="entry name" value="Carbamate kinase-like"/>
    <property type="match status" value="1"/>
</dbReference>
<dbReference type="PROSITE" id="PS00902">
    <property type="entry name" value="GLUTAMATE_5_KINASE"/>
    <property type="match status" value="1"/>
</dbReference>
<keyword id="KW-0028">Amino-acid biosynthesis</keyword>
<keyword id="KW-0067">ATP-binding</keyword>
<keyword id="KW-0963">Cytoplasm</keyword>
<keyword id="KW-0418">Kinase</keyword>
<keyword id="KW-0547">Nucleotide-binding</keyword>
<keyword id="KW-0641">Proline biosynthesis</keyword>
<keyword id="KW-1185">Reference proteome</keyword>
<keyword id="KW-0808">Transferase</keyword>
<protein>
    <recommendedName>
        <fullName evidence="1">Glutamate 5-kinase</fullName>
        <ecNumber evidence="1">2.7.2.11</ecNumber>
    </recommendedName>
    <alternativeName>
        <fullName evidence="1">Gamma-glutamyl kinase</fullName>
        <shortName evidence="1">GK</shortName>
    </alternativeName>
</protein>
<accession>Q839W2</accession>
<organism>
    <name type="scientific">Enterococcus faecalis (strain ATCC 700802 / V583)</name>
    <dbReference type="NCBI Taxonomy" id="226185"/>
    <lineage>
        <taxon>Bacteria</taxon>
        <taxon>Bacillati</taxon>
        <taxon>Bacillota</taxon>
        <taxon>Bacilli</taxon>
        <taxon>Lactobacillales</taxon>
        <taxon>Enterococcaceae</taxon>
        <taxon>Enterococcus</taxon>
    </lineage>
</organism>
<feature type="chain" id="PRO_0000109672" description="Glutamate 5-kinase">
    <location>
        <begin position="1"/>
        <end position="271"/>
    </location>
</feature>
<feature type="binding site" evidence="1">
    <location>
        <position position="14"/>
    </location>
    <ligand>
        <name>ATP</name>
        <dbReference type="ChEBI" id="CHEBI:30616"/>
    </ligand>
</feature>
<feature type="binding site" evidence="1">
    <location>
        <position position="54"/>
    </location>
    <ligand>
        <name>substrate</name>
    </ligand>
</feature>
<feature type="binding site" evidence="1">
    <location>
        <position position="141"/>
    </location>
    <ligand>
        <name>substrate</name>
    </ligand>
</feature>
<feature type="binding site" evidence="1">
    <location>
        <position position="157"/>
    </location>
    <ligand>
        <name>substrate</name>
    </ligand>
</feature>
<feature type="binding site" evidence="1">
    <location>
        <begin position="177"/>
        <end position="178"/>
    </location>
    <ligand>
        <name>ATP</name>
        <dbReference type="ChEBI" id="CHEBI:30616"/>
    </ligand>
</feature>
<feature type="binding site" evidence="1">
    <location>
        <begin position="219"/>
        <end position="225"/>
    </location>
    <ligand>
        <name>ATP</name>
        <dbReference type="ChEBI" id="CHEBI:30616"/>
    </ligand>
</feature>
<gene>
    <name evidence="1" type="primary">proB</name>
    <name type="ordered locus">EF_0038</name>
</gene>
<reference key="1">
    <citation type="journal article" date="2003" name="Science">
        <title>Role of mobile DNA in the evolution of vancomycin-resistant Enterococcus faecalis.</title>
        <authorList>
            <person name="Paulsen I.T."/>
            <person name="Banerjei L."/>
            <person name="Myers G.S.A."/>
            <person name="Nelson K.E."/>
            <person name="Seshadri R."/>
            <person name="Read T.D."/>
            <person name="Fouts D.E."/>
            <person name="Eisen J.A."/>
            <person name="Gill S.R."/>
            <person name="Heidelberg J.F."/>
            <person name="Tettelin H."/>
            <person name="Dodson R.J."/>
            <person name="Umayam L.A."/>
            <person name="Brinkac L.M."/>
            <person name="Beanan M.J."/>
            <person name="Daugherty S.C."/>
            <person name="DeBoy R.T."/>
            <person name="Durkin S.A."/>
            <person name="Kolonay J.F."/>
            <person name="Madupu R."/>
            <person name="Nelson W.C."/>
            <person name="Vamathevan J.J."/>
            <person name="Tran B."/>
            <person name="Upton J."/>
            <person name="Hansen T."/>
            <person name="Shetty J."/>
            <person name="Khouri H.M."/>
            <person name="Utterback T.R."/>
            <person name="Radune D."/>
            <person name="Ketchum K.A."/>
            <person name="Dougherty B.A."/>
            <person name="Fraser C.M."/>
        </authorList>
    </citation>
    <scope>NUCLEOTIDE SEQUENCE [LARGE SCALE GENOMIC DNA]</scope>
    <source>
        <strain>ATCC 700802 / V583</strain>
    </source>
</reference>
<sequence>MRNKLQQAKRIVIKVGTSSLIYPNGNINLKAIDQLAFTLSDLSNQGKEIILVSSGAIGVGLNKLNLSVRPTTIPEQQAVAAVGQAELMNIYNQRFSTYSQQMAQVLLTRDVIEYPESRNNVTNTFEQLLKMNIIPIVNENDTVAIEELDHLTKFGDNDQLSAIVCQIVQADLLVMLSDIDGFFSDNPTVNKEATLFSEINEINEDLFQLAGGKGSRFGTGGMSSKLKAAERVLANQQAMILANGKQPKIIFEILEGKDIGTLFIKGGHESD</sequence>
<name>PROB_ENTFA</name>
<comment type="function">
    <text evidence="1">Catalyzes the transfer of a phosphate group to glutamate to form L-glutamate 5-phosphate.</text>
</comment>
<comment type="catalytic activity">
    <reaction evidence="1">
        <text>L-glutamate + ATP = L-glutamyl 5-phosphate + ADP</text>
        <dbReference type="Rhea" id="RHEA:14877"/>
        <dbReference type="ChEBI" id="CHEBI:29985"/>
        <dbReference type="ChEBI" id="CHEBI:30616"/>
        <dbReference type="ChEBI" id="CHEBI:58274"/>
        <dbReference type="ChEBI" id="CHEBI:456216"/>
        <dbReference type="EC" id="2.7.2.11"/>
    </reaction>
</comment>
<comment type="pathway">
    <text evidence="1">Amino-acid biosynthesis; L-proline biosynthesis; L-glutamate 5-semialdehyde from L-glutamate: step 1/2.</text>
</comment>
<comment type="subcellular location">
    <subcellularLocation>
        <location evidence="1">Cytoplasm</location>
    </subcellularLocation>
</comment>
<comment type="similarity">
    <text evidence="1">Belongs to the glutamate 5-kinase family.</text>
</comment>
<evidence type="ECO:0000255" key="1">
    <source>
        <dbReference type="HAMAP-Rule" id="MF_00456"/>
    </source>
</evidence>
<proteinExistence type="inferred from homology"/>